<gene>
    <name evidence="3" type="primary">crtEb</name>
</gene>
<reference key="1">
    <citation type="journal article" date="2001" name="Eur. J. Biochem.">
        <title>Expression and functional analysis of a gene cluster involved in the synthesis of decaprenoxanthin reveals the mechanisms for C50 carotenoid formation.</title>
        <authorList>
            <person name="Krubasik P."/>
            <person name="Kobayashi M."/>
            <person name="Sandmann G."/>
        </authorList>
    </citation>
    <scope>NUCLEOTIDE SEQUENCE [GENOMIC DNA]</scope>
    <scope>FUNCTION</scope>
    <scope>CATALYTIC ACTIVITY</scope>
    <scope>PATHWAY</scope>
    <scope>DISRUPTION PHENOTYPE</scope>
    <source>
        <strain>MJ233</strain>
    </source>
</reference>
<dbReference type="EC" id="2.5.1.149" evidence="2"/>
<dbReference type="EMBL" id="AF159510">
    <property type="protein sequence ID" value="AAK64302.1"/>
    <property type="molecule type" value="Genomic_DNA"/>
</dbReference>
<dbReference type="BioCyc" id="MetaCyc:MONOMER-20367"/>
<dbReference type="BRENDA" id="2.5.1.149">
    <property type="organism ID" value="960"/>
</dbReference>
<dbReference type="GO" id="GO:0005886">
    <property type="term" value="C:plasma membrane"/>
    <property type="evidence" value="ECO:0007669"/>
    <property type="project" value="UniProtKB-SubCell"/>
</dbReference>
<dbReference type="GO" id="GO:0016765">
    <property type="term" value="F:transferase activity, transferring alkyl or aryl (other than methyl) groups"/>
    <property type="evidence" value="ECO:0007669"/>
    <property type="project" value="InterPro"/>
</dbReference>
<dbReference type="CDD" id="cd13966">
    <property type="entry name" value="PT_UbiA_4"/>
    <property type="match status" value="1"/>
</dbReference>
<dbReference type="Gene3D" id="1.10.357.140">
    <property type="entry name" value="UbiA prenyltransferase"/>
    <property type="match status" value="1"/>
</dbReference>
<dbReference type="Gene3D" id="1.20.120.1780">
    <property type="entry name" value="UbiA prenyltransferase"/>
    <property type="match status" value="1"/>
</dbReference>
<dbReference type="InterPro" id="IPR050475">
    <property type="entry name" value="Prenyltransferase_related"/>
</dbReference>
<dbReference type="InterPro" id="IPR000537">
    <property type="entry name" value="UbiA_prenyltransferase"/>
</dbReference>
<dbReference type="InterPro" id="IPR044878">
    <property type="entry name" value="UbiA_sf"/>
</dbReference>
<dbReference type="NCBIfam" id="NF009608">
    <property type="entry name" value="PRK13105.1"/>
    <property type="match status" value="1"/>
</dbReference>
<dbReference type="PANTHER" id="PTHR42723">
    <property type="entry name" value="CHLOROPHYLL SYNTHASE"/>
    <property type="match status" value="1"/>
</dbReference>
<dbReference type="PANTHER" id="PTHR42723:SF1">
    <property type="entry name" value="CHLOROPHYLL SYNTHASE, CHLOROPLASTIC"/>
    <property type="match status" value="1"/>
</dbReference>
<dbReference type="Pfam" id="PF01040">
    <property type="entry name" value="UbiA"/>
    <property type="match status" value="1"/>
</dbReference>
<protein>
    <recommendedName>
        <fullName evidence="4">Lycopene elongase/hydratase</fullName>
        <ecNumber evidence="2">2.5.1.149</ecNumber>
    </recommendedName>
</protein>
<evidence type="ECO:0000255" key="1"/>
<evidence type="ECO:0000269" key="2">
    <source>
    </source>
</evidence>
<evidence type="ECO:0000303" key="3">
    <source>
    </source>
</evidence>
<evidence type="ECO:0000305" key="4"/>
<evidence type="ECO:0000305" key="5">
    <source>
    </source>
</evidence>
<sequence length="287" mass="31674">MMEKIRLILLSSRPISWVNTAYPFGLAYLLNAGEIDWLFWLGIVFFLIPYNIAMYGINDVFDYESDIRNPRKGGVEGAVLPKSSHSTLLWASAISTIPFLVILFIFGTWMSSLWLTISVLAVIAYSAPKLRFKERPFIDALTSSTHFTSPALIGATITGTSPSAAMWIALGSFFLWGMASQILGAVQDVNADREANLSSIATVIGARGAIRLSVVLYLLAAVLVTTLPNPAWIIGIAILTYVFDAARFWNITDASCEQANRSWKVFLWLNYFVGAVITILLIAIHQI</sequence>
<proteinExistence type="evidence at protein level"/>
<comment type="function">
    <text evidence="2 5">Catalyzes the elongation of the C(40) carotenoid all-trans-lycopene to the acyclic C(50) carotenoid flavuxanthin during decaprenoxanthin biosynthesis (PubMed:11432736). Acts as a bifunctional enzyme that catalyzes the elongation of lycopene by attaching a C(5) isoprene unit at C-2, as well as the hydroxylation of the new isoprene unit (Probable). The enzyme acts at both ends of the substrate, forming the C(50) carotenoid flavuxanthin via the C(45) intermediate nonaflavuxanthin (PubMed:11432736).</text>
</comment>
<comment type="catalytic activity">
    <reaction evidence="2">
        <text>all-trans-lycopene + dimethylallyl diphosphate + A + H2O = nonaflavuxanthin + AH2 + diphosphate</text>
        <dbReference type="Rhea" id="RHEA:56124"/>
        <dbReference type="ChEBI" id="CHEBI:13193"/>
        <dbReference type="ChEBI" id="CHEBI:15377"/>
        <dbReference type="ChEBI" id="CHEBI:15948"/>
        <dbReference type="ChEBI" id="CHEBI:17499"/>
        <dbReference type="ChEBI" id="CHEBI:33019"/>
        <dbReference type="ChEBI" id="CHEBI:57623"/>
        <dbReference type="ChEBI" id="CHEBI:139514"/>
        <dbReference type="EC" id="2.5.1.149"/>
    </reaction>
</comment>
<comment type="catalytic activity">
    <reaction evidence="2">
        <text>nonaflavuxanthin + dimethylallyl diphosphate + A + H2O = flavuxanthin + AH2 + diphosphate</text>
        <dbReference type="Rhea" id="RHEA:56128"/>
        <dbReference type="ChEBI" id="CHEBI:13193"/>
        <dbReference type="ChEBI" id="CHEBI:15377"/>
        <dbReference type="ChEBI" id="CHEBI:17499"/>
        <dbReference type="ChEBI" id="CHEBI:33019"/>
        <dbReference type="ChEBI" id="CHEBI:57623"/>
        <dbReference type="ChEBI" id="CHEBI:139514"/>
        <dbReference type="ChEBI" id="CHEBI:139515"/>
        <dbReference type="EC" id="2.5.1.149"/>
    </reaction>
</comment>
<comment type="pathway">
    <text evidence="2">Carotenoid biosynthesis.</text>
</comment>
<comment type="subcellular location">
    <subcellularLocation>
        <location evidence="4">Cell membrane</location>
        <topology evidence="1">Multi-pass membrane protein</topology>
    </subcellularLocation>
</comment>
<comment type="disruption phenotype">
    <text evidence="2">Disruption mutant accumulates lycopene and shows altered carotenoid biosynthesis.</text>
</comment>
<comment type="similarity">
    <text evidence="4">Belongs to the UbiA prenyltransferase family.</text>
</comment>
<feature type="chain" id="PRO_0000450583" description="Lycopene elongase/hydratase">
    <location>
        <begin position="1"/>
        <end position="287"/>
    </location>
</feature>
<feature type="transmembrane region" description="Helical" evidence="1">
    <location>
        <begin position="15"/>
        <end position="35"/>
    </location>
</feature>
<feature type="transmembrane region" description="Helical" evidence="1">
    <location>
        <begin position="37"/>
        <end position="57"/>
    </location>
</feature>
<feature type="transmembrane region" description="Helical" evidence="1">
    <location>
        <begin position="97"/>
        <end position="117"/>
    </location>
</feature>
<feature type="transmembrane region" description="Helical" evidence="1">
    <location>
        <begin position="137"/>
        <end position="157"/>
    </location>
</feature>
<feature type="transmembrane region" description="Helical" evidence="1">
    <location>
        <begin position="166"/>
        <end position="186"/>
    </location>
</feature>
<feature type="transmembrane region" description="Helical" evidence="1">
    <location>
        <begin position="218"/>
        <end position="238"/>
    </location>
</feature>
<feature type="transmembrane region" description="Helical" evidence="1">
    <location>
        <begin position="265"/>
        <end position="285"/>
    </location>
</feature>
<keyword id="KW-1003">Cell membrane</keyword>
<keyword id="KW-0472">Membrane</keyword>
<keyword id="KW-0808">Transferase</keyword>
<keyword id="KW-0812">Transmembrane</keyword>
<keyword id="KW-1133">Transmembrane helix</keyword>
<organism>
    <name type="scientific">Corynebacterium glutamicum</name>
    <name type="common">Brevibacterium saccharolyticum</name>
    <dbReference type="NCBI Taxonomy" id="1718"/>
    <lineage>
        <taxon>Bacteria</taxon>
        <taxon>Bacillati</taxon>
        <taxon>Actinomycetota</taxon>
        <taxon>Actinomycetes</taxon>
        <taxon>Mycobacteriales</taxon>
        <taxon>Corynebacteriaceae</taxon>
        <taxon>Corynebacterium</taxon>
    </lineage>
</organism>
<name>CRTEB_CORGT</name>
<accession>Q93QX2</accession>